<feature type="initiator methionine" description="Removed" evidence="4">
    <location>
        <position position="1"/>
    </location>
</feature>
<feature type="chain" id="PRO_0000118538" description="NAD-reducing hydrogenase HoxS subunit gamma">
    <location>
        <begin position="2"/>
        <end position="234"/>
    </location>
</feature>
<feature type="domain" description="2Fe-2S ferredoxin-type" evidence="2">
    <location>
        <begin position="2"/>
        <end position="77"/>
    </location>
</feature>
<feature type="domain" description="4Fe-4S His(Cys)3-ligated-type" evidence="3">
    <location>
        <begin position="77"/>
        <end position="116"/>
    </location>
</feature>
<feature type="binding site" evidence="2">
    <location>
        <position position="35"/>
    </location>
    <ligand>
        <name>[2Fe-2S] cluster</name>
        <dbReference type="ChEBI" id="CHEBI:190135"/>
    </ligand>
</feature>
<feature type="binding site" evidence="2">
    <location>
        <position position="46"/>
    </location>
    <ligand>
        <name>[2Fe-2S] cluster</name>
        <dbReference type="ChEBI" id="CHEBI:190135"/>
    </ligand>
</feature>
<feature type="binding site" evidence="2">
    <location>
        <position position="49"/>
    </location>
    <ligand>
        <name>[2Fe-2S] cluster</name>
        <dbReference type="ChEBI" id="CHEBI:190135"/>
    </ligand>
</feature>
<feature type="binding site" evidence="2">
    <location>
        <position position="61"/>
    </location>
    <ligand>
        <name>[2Fe-2S] cluster</name>
        <dbReference type="ChEBI" id="CHEBI:190135"/>
    </ligand>
</feature>
<feature type="binding site" evidence="3">
    <location>
        <position position="95"/>
    </location>
    <ligand>
        <name>[4Fe-4S] cluster</name>
        <dbReference type="ChEBI" id="CHEBI:49883"/>
        <label>1</label>
    </ligand>
</feature>
<feature type="binding site" evidence="3">
    <location>
        <position position="97"/>
    </location>
    <ligand>
        <name>[4Fe-4S] cluster</name>
        <dbReference type="ChEBI" id="CHEBI:49883"/>
        <label>1</label>
    </ligand>
</feature>
<feature type="binding site" evidence="3">
    <location>
        <position position="100"/>
    </location>
    <ligand>
        <name>[4Fe-4S] cluster</name>
        <dbReference type="ChEBI" id="CHEBI:49883"/>
        <label>1</label>
    </ligand>
</feature>
<feature type="binding site" evidence="3">
    <location>
        <position position="106"/>
    </location>
    <ligand>
        <name>[4Fe-4S] cluster</name>
        <dbReference type="ChEBI" id="CHEBI:49883"/>
        <label>1</label>
    </ligand>
</feature>
<feature type="binding site" evidence="1">
    <location>
        <position position="145"/>
    </location>
    <ligand>
        <name>[4Fe-4S] cluster</name>
        <dbReference type="ChEBI" id="CHEBI:49883"/>
        <label>2</label>
    </ligand>
</feature>
<feature type="binding site" evidence="1">
    <location>
        <position position="148"/>
    </location>
    <ligand>
        <name>[4Fe-4S] cluster</name>
        <dbReference type="ChEBI" id="CHEBI:49883"/>
        <label>2</label>
    </ligand>
</feature>
<feature type="binding site" evidence="1">
    <location>
        <position position="151"/>
    </location>
    <ligand>
        <name>[4Fe-4S] cluster</name>
        <dbReference type="ChEBI" id="CHEBI:49883"/>
        <label>2</label>
    </ligand>
</feature>
<feature type="binding site" evidence="1">
    <location>
        <position position="198"/>
    </location>
    <ligand>
        <name>[4Fe-4S] cluster</name>
        <dbReference type="ChEBI" id="CHEBI:49883"/>
        <label>2</label>
    </ligand>
</feature>
<keyword id="KW-0001">2Fe-2S</keyword>
<keyword id="KW-0004">4Fe-4S</keyword>
<keyword id="KW-0963">Cytoplasm</keyword>
<keyword id="KW-0903">Direct protein sequencing</keyword>
<keyword id="KW-0285">Flavoprotein</keyword>
<keyword id="KW-0288">FMN</keyword>
<keyword id="KW-0408">Iron</keyword>
<keyword id="KW-0411">Iron-sulfur</keyword>
<keyword id="KW-0479">Metal-binding</keyword>
<keyword id="KW-0520">NAD</keyword>
<keyword id="KW-0560">Oxidoreductase</keyword>
<keyword id="KW-0614">Plasmid</keyword>
<keyword id="KW-1185">Reference proteome</keyword>
<gene>
    <name type="primary">hoxU</name>
    <name type="ordered locus">PHG089</name>
</gene>
<accession>P22318</accession>
<geneLocation type="plasmid">
    <name>megaplasmid pHG1</name>
</geneLocation>
<sequence>MSIQITIDGKTLTTEEGRTLVDVAAENGVYIPTLCYLKDKPCLGTCRVCSVKVNGNVAAACTVRVSKGLNVEVNDPELVDMRKALVEFLFAEGNHNCPSCEKSGRCQLQAVGYEVDMMVSRFPYRFPVRVVDHASEKIWLERDRCIFCQRCVEFIRDKASGRKIFSISHRGPESRIEIDAELANAMPPEQVKEAVAICPVGTILEKRVGYDDPIGRRKYEIQSVRARALEGEDK</sequence>
<comment type="function">
    <text>Subunits alpha and gamma of HoxS constitute an NADH--oxidoreductase.</text>
</comment>
<comment type="catalytic activity">
    <reaction>
        <text>H2 + NAD(+) = NADH + H(+)</text>
        <dbReference type="Rhea" id="RHEA:24636"/>
        <dbReference type="ChEBI" id="CHEBI:15378"/>
        <dbReference type="ChEBI" id="CHEBI:18276"/>
        <dbReference type="ChEBI" id="CHEBI:57540"/>
        <dbReference type="ChEBI" id="CHEBI:57945"/>
        <dbReference type="EC" id="1.12.1.2"/>
    </reaction>
</comment>
<comment type="cofactor">
    <cofactor evidence="2">
        <name>[2Fe-2S] cluster</name>
        <dbReference type="ChEBI" id="CHEBI:190135"/>
    </cofactor>
    <text evidence="2">Binds 1 [2Fe-2S] cluster.</text>
</comment>
<comment type="cofactor">
    <cofactor evidence="5">
        <name>[4Fe-4S] cluster</name>
        <dbReference type="ChEBI" id="CHEBI:49883"/>
    </cofactor>
    <text evidence="5">Binds 2 [4Fe-4S] clusters per subunit.</text>
</comment>
<comment type="subunit">
    <text>Tetramer of an alpha and a gamma subunits (flavin-containing dimer), and a delta and a nickel-containing beta subunits (hydrogenase dimer).</text>
</comment>
<comment type="subcellular location">
    <subcellularLocation>
        <location>Cytoplasm</location>
    </subcellularLocation>
</comment>
<comment type="similarity">
    <text evidence="5">Belongs to the complex I 75 kDa subunit family.</text>
</comment>
<evidence type="ECO:0000250" key="1"/>
<evidence type="ECO:0000255" key="2">
    <source>
        <dbReference type="PROSITE-ProRule" id="PRU00465"/>
    </source>
</evidence>
<evidence type="ECO:0000255" key="3">
    <source>
        <dbReference type="PROSITE-ProRule" id="PRU01184"/>
    </source>
</evidence>
<evidence type="ECO:0000269" key="4">
    <source>
    </source>
</evidence>
<evidence type="ECO:0000305" key="5"/>
<proteinExistence type="evidence at protein level"/>
<organism>
    <name type="scientific">Cupriavidus necator (strain ATCC 17699 / DSM 428 / KCTC 22496 / NCIMB 10442 / H16 / Stanier 337)</name>
    <name type="common">Ralstonia eutropha</name>
    <dbReference type="NCBI Taxonomy" id="381666"/>
    <lineage>
        <taxon>Bacteria</taxon>
        <taxon>Pseudomonadati</taxon>
        <taxon>Pseudomonadota</taxon>
        <taxon>Betaproteobacteria</taxon>
        <taxon>Burkholderiales</taxon>
        <taxon>Burkholderiaceae</taxon>
        <taxon>Cupriavidus</taxon>
    </lineage>
</organism>
<dbReference type="EC" id="1.12.1.2"/>
<dbReference type="EMBL" id="M55230">
    <property type="protein sequence ID" value="AAC06141.1"/>
    <property type="molecule type" value="Genomic_DNA"/>
</dbReference>
<dbReference type="EMBL" id="AY305378">
    <property type="protein sequence ID" value="AAP85842.1"/>
    <property type="molecule type" value="Genomic_DNA"/>
</dbReference>
<dbReference type="PIR" id="B35385">
    <property type="entry name" value="B35385"/>
</dbReference>
<dbReference type="RefSeq" id="WP_011154011.1">
    <property type="nucleotide sequence ID" value="NC_005241.1"/>
</dbReference>
<dbReference type="SMR" id="P22318"/>
<dbReference type="KEGG" id="reh:PHG089"/>
<dbReference type="PATRIC" id="fig|381666.6.peg.66"/>
<dbReference type="eggNOG" id="COG3383">
    <property type="taxonomic scope" value="Bacteria"/>
</dbReference>
<dbReference type="HOGENOM" id="CLU_000422_11_3_4"/>
<dbReference type="OrthoDB" id="9810782at2"/>
<dbReference type="BioCyc" id="MetaCyc:HOXUALCA-MONOMER"/>
<dbReference type="BRENDA" id="1.12.1.2">
    <property type="organism ID" value="231"/>
</dbReference>
<dbReference type="Proteomes" id="UP000008210">
    <property type="component" value="Plasmid megaplasmid pHG1"/>
</dbReference>
<dbReference type="GO" id="GO:0005737">
    <property type="term" value="C:cytoplasm"/>
    <property type="evidence" value="ECO:0007669"/>
    <property type="project" value="UniProtKB-SubCell"/>
</dbReference>
<dbReference type="GO" id="GO:0016020">
    <property type="term" value="C:membrane"/>
    <property type="evidence" value="ECO:0007669"/>
    <property type="project" value="InterPro"/>
</dbReference>
<dbReference type="GO" id="GO:0051537">
    <property type="term" value="F:2 iron, 2 sulfur cluster binding"/>
    <property type="evidence" value="ECO:0007669"/>
    <property type="project" value="UniProtKB-KW"/>
</dbReference>
<dbReference type="GO" id="GO:0051539">
    <property type="term" value="F:4 iron, 4 sulfur cluster binding"/>
    <property type="evidence" value="ECO:0007669"/>
    <property type="project" value="UniProtKB-KW"/>
</dbReference>
<dbReference type="GO" id="GO:0047985">
    <property type="term" value="F:hydrogen dehydrogenase activity"/>
    <property type="evidence" value="ECO:0007669"/>
    <property type="project" value="UniProtKB-EC"/>
</dbReference>
<dbReference type="GO" id="GO:0046872">
    <property type="term" value="F:metal ion binding"/>
    <property type="evidence" value="ECO:0007669"/>
    <property type="project" value="UniProtKB-KW"/>
</dbReference>
<dbReference type="GO" id="GO:0008137">
    <property type="term" value="F:NADH dehydrogenase (ubiquinone) activity"/>
    <property type="evidence" value="ECO:0007669"/>
    <property type="project" value="InterPro"/>
</dbReference>
<dbReference type="GO" id="GO:0042773">
    <property type="term" value="P:ATP synthesis coupled electron transport"/>
    <property type="evidence" value="ECO:0007669"/>
    <property type="project" value="InterPro"/>
</dbReference>
<dbReference type="CDD" id="cd00207">
    <property type="entry name" value="fer2"/>
    <property type="match status" value="1"/>
</dbReference>
<dbReference type="Gene3D" id="3.10.20.740">
    <property type="match status" value="1"/>
</dbReference>
<dbReference type="Gene3D" id="3.30.70.20">
    <property type="match status" value="1"/>
</dbReference>
<dbReference type="InterPro" id="IPR036010">
    <property type="entry name" value="2Fe-2S_ferredoxin-like_sf"/>
</dbReference>
<dbReference type="InterPro" id="IPR001041">
    <property type="entry name" value="2Fe-2S_ferredoxin-type"/>
</dbReference>
<dbReference type="InterPro" id="IPR016214">
    <property type="entry name" value="NAD-red_Hydgase_HoxS_gsu"/>
</dbReference>
<dbReference type="InterPro" id="IPR000283">
    <property type="entry name" value="NADH_UbQ_OxRdtase_75kDa_su_CS"/>
</dbReference>
<dbReference type="InterPro" id="IPR054351">
    <property type="entry name" value="NADH_UbQ_OxRdtase_ferredoxin"/>
</dbReference>
<dbReference type="InterPro" id="IPR019574">
    <property type="entry name" value="NADH_UbQ_OxRdtase_Gsu_4Fe4S-bd"/>
</dbReference>
<dbReference type="Pfam" id="PF13510">
    <property type="entry name" value="Fer2_4"/>
    <property type="match status" value="1"/>
</dbReference>
<dbReference type="Pfam" id="PF22117">
    <property type="entry name" value="Fer4_Nqo3"/>
    <property type="match status" value="1"/>
</dbReference>
<dbReference type="Pfam" id="PF10588">
    <property type="entry name" value="NADH-G_4Fe-4S_3"/>
    <property type="match status" value="1"/>
</dbReference>
<dbReference type="PIRSF" id="PIRSF000309">
    <property type="entry name" value="NAD_red_hyd_HoxU"/>
    <property type="match status" value="1"/>
</dbReference>
<dbReference type="SMART" id="SM00929">
    <property type="entry name" value="NADH-G_4Fe-4S_3"/>
    <property type="match status" value="1"/>
</dbReference>
<dbReference type="SUPFAM" id="SSF54292">
    <property type="entry name" value="2Fe-2S ferredoxin-like"/>
    <property type="match status" value="1"/>
</dbReference>
<dbReference type="PROSITE" id="PS51085">
    <property type="entry name" value="2FE2S_FER_2"/>
    <property type="match status" value="1"/>
</dbReference>
<dbReference type="PROSITE" id="PS51839">
    <property type="entry name" value="4FE4S_HC3"/>
    <property type="match status" value="1"/>
</dbReference>
<dbReference type="PROSITE" id="PS00641">
    <property type="entry name" value="COMPLEX1_75K_1"/>
    <property type="match status" value="1"/>
</dbReference>
<dbReference type="PROSITE" id="PS00642">
    <property type="entry name" value="COMPLEX1_75K_2"/>
    <property type="match status" value="1"/>
</dbReference>
<dbReference type="PROSITE" id="PS00643">
    <property type="entry name" value="COMPLEX1_75K_3"/>
    <property type="match status" value="1"/>
</dbReference>
<protein>
    <recommendedName>
        <fullName>NAD-reducing hydrogenase HoxS subunit gamma</fullName>
        <ecNumber>1.12.1.2</ecNumber>
    </recommendedName>
</protein>
<reference key="1">
    <citation type="journal article" date="1990" name="J. Bacteriol.">
        <title>Cloning and nucleotide sequences of the genes for the subunits of NAD-reducing hydrogenase of Alcaligenes eutrophus H16.</title>
        <authorList>
            <person name="Tran-Betcke A."/>
            <person name="Warnecke U."/>
            <person name="Boecker C."/>
            <person name="Zaborosch C."/>
            <person name="Friedrich B."/>
        </authorList>
    </citation>
    <scope>NUCLEOTIDE SEQUENCE [GENOMIC DNA]</scope>
</reference>
<reference key="2">
    <citation type="journal article" date="2003" name="J. Mol. Biol.">
        <title>Complete nucleotide sequence of pHG1: a Ralstonia eutropha H16 megaplasmid encoding key enzymes of H(2)-based lithoautotrophy and anaerobiosis.</title>
        <authorList>
            <person name="Schwartz E."/>
            <person name="Henne A."/>
            <person name="Cramm R."/>
            <person name="Eitinger T."/>
            <person name="Friedrich B."/>
            <person name="Gottschalk G."/>
        </authorList>
    </citation>
    <scope>NUCLEOTIDE SEQUENCE [LARGE SCALE GENOMIC DNA]</scope>
    <source>
        <strain>ATCC 17699 / DSM 428 / KCTC 22496 / NCIMB 10442 / H16 / Stanier 337</strain>
    </source>
</reference>
<reference key="3">
    <citation type="journal article" date="1989" name="Eur. J. Biochem.">
        <title>Comparison of the NH2-terminal amino acid sequences of the four non-identical subunits of the NAD-linked hydrogenases from Nocardia opaca 1b and Alcaligenes eutrophus H16.</title>
        <authorList>
            <person name="Zaborosch C."/>
            <person name="Schneider K."/>
            <person name="Schlegel H.G."/>
            <person name="Kratzin H."/>
        </authorList>
    </citation>
    <scope>PROTEIN SEQUENCE OF 2-26</scope>
</reference>
<name>HOXU_CUPNH</name>